<protein>
    <recommendedName>
        <fullName evidence="1">Methionine--tRNA ligase</fullName>
        <ecNumber evidence="1">6.1.1.10</ecNumber>
    </recommendedName>
    <alternativeName>
        <fullName evidence="1">Methionyl-tRNA synthetase</fullName>
        <shortName evidence="1">MetRS</shortName>
    </alternativeName>
</protein>
<comment type="function">
    <text evidence="1">Is required not only for elongation of protein synthesis but also for the initiation of all mRNA translation through initiator tRNA(fMet) aminoacylation.</text>
</comment>
<comment type="catalytic activity">
    <reaction evidence="1">
        <text>tRNA(Met) + L-methionine + ATP = L-methionyl-tRNA(Met) + AMP + diphosphate</text>
        <dbReference type="Rhea" id="RHEA:13481"/>
        <dbReference type="Rhea" id="RHEA-COMP:9667"/>
        <dbReference type="Rhea" id="RHEA-COMP:9698"/>
        <dbReference type="ChEBI" id="CHEBI:30616"/>
        <dbReference type="ChEBI" id="CHEBI:33019"/>
        <dbReference type="ChEBI" id="CHEBI:57844"/>
        <dbReference type="ChEBI" id="CHEBI:78442"/>
        <dbReference type="ChEBI" id="CHEBI:78530"/>
        <dbReference type="ChEBI" id="CHEBI:456215"/>
        <dbReference type="EC" id="6.1.1.10"/>
    </reaction>
</comment>
<comment type="cofactor">
    <cofactor evidence="1">
        <name>Zn(2+)</name>
        <dbReference type="ChEBI" id="CHEBI:29105"/>
    </cofactor>
    <text evidence="1">Binds 1 zinc ion per subunit.</text>
</comment>
<comment type="subunit">
    <text evidence="1">Homodimer.</text>
</comment>
<comment type="subcellular location">
    <subcellularLocation>
        <location evidence="1">Cytoplasm</location>
    </subcellularLocation>
</comment>
<comment type="similarity">
    <text evidence="1">Belongs to the class-I aminoacyl-tRNA synthetase family. MetG type 1 subfamily.</text>
</comment>
<accession>A8AEB2</accession>
<name>SYM_CITK8</name>
<keyword id="KW-0030">Aminoacyl-tRNA synthetase</keyword>
<keyword id="KW-0067">ATP-binding</keyword>
<keyword id="KW-0963">Cytoplasm</keyword>
<keyword id="KW-0436">Ligase</keyword>
<keyword id="KW-0479">Metal-binding</keyword>
<keyword id="KW-0547">Nucleotide-binding</keyword>
<keyword id="KW-0648">Protein biosynthesis</keyword>
<keyword id="KW-1185">Reference proteome</keyword>
<keyword id="KW-0694">RNA-binding</keyword>
<keyword id="KW-0820">tRNA-binding</keyword>
<keyword id="KW-0862">Zinc</keyword>
<proteinExistence type="inferred from homology"/>
<evidence type="ECO:0000255" key="1">
    <source>
        <dbReference type="HAMAP-Rule" id="MF_00098"/>
    </source>
</evidence>
<gene>
    <name evidence="1" type="primary">metG</name>
    <name type="ordered locus">CKO_00671</name>
</gene>
<dbReference type="EC" id="6.1.1.10" evidence="1"/>
<dbReference type="EMBL" id="CP000822">
    <property type="protein sequence ID" value="ABV11825.1"/>
    <property type="molecule type" value="Genomic_DNA"/>
</dbReference>
<dbReference type="RefSeq" id="WP_012131649.1">
    <property type="nucleotide sequence ID" value="NC_009792.1"/>
</dbReference>
<dbReference type="SMR" id="A8AEB2"/>
<dbReference type="STRING" id="290338.CKO_00671"/>
<dbReference type="GeneID" id="45134891"/>
<dbReference type="KEGG" id="cko:CKO_00671"/>
<dbReference type="HOGENOM" id="CLU_009710_7_0_6"/>
<dbReference type="OrthoDB" id="9810191at2"/>
<dbReference type="Proteomes" id="UP000008148">
    <property type="component" value="Chromosome"/>
</dbReference>
<dbReference type="GO" id="GO:0005829">
    <property type="term" value="C:cytosol"/>
    <property type="evidence" value="ECO:0007669"/>
    <property type="project" value="TreeGrafter"/>
</dbReference>
<dbReference type="GO" id="GO:0005524">
    <property type="term" value="F:ATP binding"/>
    <property type="evidence" value="ECO:0007669"/>
    <property type="project" value="UniProtKB-UniRule"/>
</dbReference>
<dbReference type="GO" id="GO:0046872">
    <property type="term" value="F:metal ion binding"/>
    <property type="evidence" value="ECO:0007669"/>
    <property type="project" value="UniProtKB-KW"/>
</dbReference>
<dbReference type="GO" id="GO:0004825">
    <property type="term" value="F:methionine-tRNA ligase activity"/>
    <property type="evidence" value="ECO:0007669"/>
    <property type="project" value="UniProtKB-UniRule"/>
</dbReference>
<dbReference type="GO" id="GO:0000049">
    <property type="term" value="F:tRNA binding"/>
    <property type="evidence" value="ECO:0007669"/>
    <property type="project" value="UniProtKB-KW"/>
</dbReference>
<dbReference type="GO" id="GO:0006431">
    <property type="term" value="P:methionyl-tRNA aminoacylation"/>
    <property type="evidence" value="ECO:0007669"/>
    <property type="project" value="UniProtKB-UniRule"/>
</dbReference>
<dbReference type="CDD" id="cd07957">
    <property type="entry name" value="Anticodon_Ia_Met"/>
    <property type="match status" value="1"/>
</dbReference>
<dbReference type="CDD" id="cd00814">
    <property type="entry name" value="MetRS_core"/>
    <property type="match status" value="1"/>
</dbReference>
<dbReference type="CDD" id="cd02800">
    <property type="entry name" value="tRNA_bind_EcMetRS_like"/>
    <property type="match status" value="1"/>
</dbReference>
<dbReference type="FunFam" id="1.10.730.10:FF:000005">
    <property type="entry name" value="Methionine--tRNA ligase"/>
    <property type="match status" value="1"/>
</dbReference>
<dbReference type="FunFam" id="2.20.28.20:FF:000001">
    <property type="entry name" value="Methionine--tRNA ligase"/>
    <property type="match status" value="1"/>
</dbReference>
<dbReference type="FunFam" id="2.40.50.140:FF:000042">
    <property type="entry name" value="Methionine--tRNA ligase"/>
    <property type="match status" value="1"/>
</dbReference>
<dbReference type="Gene3D" id="3.40.50.620">
    <property type="entry name" value="HUPs"/>
    <property type="match status" value="1"/>
</dbReference>
<dbReference type="Gene3D" id="1.10.730.10">
    <property type="entry name" value="Isoleucyl-tRNA Synthetase, Domain 1"/>
    <property type="match status" value="1"/>
</dbReference>
<dbReference type="Gene3D" id="2.20.28.20">
    <property type="entry name" value="Methionyl-tRNA synthetase, Zn-domain"/>
    <property type="match status" value="1"/>
</dbReference>
<dbReference type="Gene3D" id="2.40.50.140">
    <property type="entry name" value="Nucleic acid-binding proteins"/>
    <property type="match status" value="1"/>
</dbReference>
<dbReference type="HAMAP" id="MF_00098">
    <property type="entry name" value="Met_tRNA_synth_type1"/>
    <property type="match status" value="1"/>
</dbReference>
<dbReference type="InterPro" id="IPR001412">
    <property type="entry name" value="aa-tRNA-synth_I_CS"/>
</dbReference>
<dbReference type="InterPro" id="IPR041872">
    <property type="entry name" value="Anticodon_Met"/>
</dbReference>
<dbReference type="InterPro" id="IPR004495">
    <property type="entry name" value="Met-tRNA-synth_bsu_C"/>
</dbReference>
<dbReference type="InterPro" id="IPR023458">
    <property type="entry name" value="Met-tRNA_ligase_1"/>
</dbReference>
<dbReference type="InterPro" id="IPR014758">
    <property type="entry name" value="Met-tRNA_synth"/>
</dbReference>
<dbReference type="InterPro" id="IPR015413">
    <property type="entry name" value="Methionyl/Leucyl_tRNA_Synth"/>
</dbReference>
<dbReference type="InterPro" id="IPR033911">
    <property type="entry name" value="MetRS_core"/>
</dbReference>
<dbReference type="InterPro" id="IPR029038">
    <property type="entry name" value="MetRS_Zn"/>
</dbReference>
<dbReference type="InterPro" id="IPR012340">
    <property type="entry name" value="NA-bd_OB-fold"/>
</dbReference>
<dbReference type="InterPro" id="IPR014729">
    <property type="entry name" value="Rossmann-like_a/b/a_fold"/>
</dbReference>
<dbReference type="InterPro" id="IPR002547">
    <property type="entry name" value="tRNA-bd_dom"/>
</dbReference>
<dbReference type="InterPro" id="IPR009080">
    <property type="entry name" value="tRNAsynth_Ia_anticodon-bd"/>
</dbReference>
<dbReference type="NCBIfam" id="TIGR00398">
    <property type="entry name" value="metG"/>
    <property type="match status" value="1"/>
</dbReference>
<dbReference type="NCBIfam" id="TIGR00399">
    <property type="entry name" value="metG_C_term"/>
    <property type="match status" value="1"/>
</dbReference>
<dbReference type="NCBIfam" id="NF001100">
    <property type="entry name" value="PRK00133.1"/>
    <property type="match status" value="1"/>
</dbReference>
<dbReference type="PANTHER" id="PTHR45765">
    <property type="entry name" value="METHIONINE--TRNA LIGASE"/>
    <property type="match status" value="1"/>
</dbReference>
<dbReference type="PANTHER" id="PTHR45765:SF1">
    <property type="entry name" value="METHIONINE--TRNA LIGASE, CYTOPLASMIC"/>
    <property type="match status" value="1"/>
</dbReference>
<dbReference type="Pfam" id="PF19303">
    <property type="entry name" value="Anticodon_3"/>
    <property type="match status" value="1"/>
</dbReference>
<dbReference type="Pfam" id="PF09334">
    <property type="entry name" value="tRNA-synt_1g"/>
    <property type="match status" value="1"/>
</dbReference>
<dbReference type="Pfam" id="PF01588">
    <property type="entry name" value="tRNA_bind"/>
    <property type="match status" value="1"/>
</dbReference>
<dbReference type="PRINTS" id="PR01041">
    <property type="entry name" value="TRNASYNTHMET"/>
</dbReference>
<dbReference type="SUPFAM" id="SSF47323">
    <property type="entry name" value="Anticodon-binding domain of a subclass of class I aminoacyl-tRNA synthetases"/>
    <property type="match status" value="1"/>
</dbReference>
<dbReference type="SUPFAM" id="SSF57770">
    <property type="entry name" value="Methionyl-tRNA synthetase (MetRS), Zn-domain"/>
    <property type="match status" value="1"/>
</dbReference>
<dbReference type="SUPFAM" id="SSF50249">
    <property type="entry name" value="Nucleic acid-binding proteins"/>
    <property type="match status" value="1"/>
</dbReference>
<dbReference type="SUPFAM" id="SSF52374">
    <property type="entry name" value="Nucleotidylyl transferase"/>
    <property type="match status" value="1"/>
</dbReference>
<dbReference type="PROSITE" id="PS00178">
    <property type="entry name" value="AA_TRNA_LIGASE_I"/>
    <property type="match status" value="1"/>
</dbReference>
<dbReference type="PROSITE" id="PS50886">
    <property type="entry name" value="TRBD"/>
    <property type="match status" value="1"/>
</dbReference>
<feature type="chain" id="PRO_0000331805" description="Methionine--tRNA ligase">
    <location>
        <begin position="1"/>
        <end position="677"/>
    </location>
</feature>
<feature type="domain" description="tRNA-binding" evidence="1">
    <location>
        <begin position="575"/>
        <end position="677"/>
    </location>
</feature>
<feature type="short sequence motif" description="'HIGH' region">
    <location>
        <begin position="15"/>
        <end position="25"/>
    </location>
</feature>
<feature type="short sequence motif" description="'KMSKS' region">
    <location>
        <begin position="333"/>
        <end position="337"/>
    </location>
</feature>
<feature type="binding site" evidence="1">
    <location>
        <position position="146"/>
    </location>
    <ligand>
        <name>Zn(2+)</name>
        <dbReference type="ChEBI" id="CHEBI:29105"/>
    </ligand>
</feature>
<feature type="binding site" evidence="1">
    <location>
        <position position="149"/>
    </location>
    <ligand>
        <name>Zn(2+)</name>
        <dbReference type="ChEBI" id="CHEBI:29105"/>
    </ligand>
</feature>
<feature type="binding site" evidence="1">
    <location>
        <position position="159"/>
    </location>
    <ligand>
        <name>Zn(2+)</name>
        <dbReference type="ChEBI" id="CHEBI:29105"/>
    </ligand>
</feature>
<feature type="binding site" evidence="1">
    <location>
        <position position="162"/>
    </location>
    <ligand>
        <name>Zn(2+)</name>
        <dbReference type="ChEBI" id="CHEBI:29105"/>
    </ligand>
</feature>
<feature type="binding site" evidence="1">
    <location>
        <position position="336"/>
    </location>
    <ligand>
        <name>ATP</name>
        <dbReference type="ChEBI" id="CHEBI:30616"/>
    </ligand>
</feature>
<organism>
    <name type="scientific">Citrobacter koseri (strain ATCC BAA-895 / CDC 4225-83 / SGSC4696)</name>
    <dbReference type="NCBI Taxonomy" id="290338"/>
    <lineage>
        <taxon>Bacteria</taxon>
        <taxon>Pseudomonadati</taxon>
        <taxon>Pseudomonadota</taxon>
        <taxon>Gammaproteobacteria</taxon>
        <taxon>Enterobacterales</taxon>
        <taxon>Enterobacteriaceae</taxon>
        <taxon>Citrobacter</taxon>
    </lineage>
</organism>
<reference key="1">
    <citation type="submission" date="2007-08" db="EMBL/GenBank/DDBJ databases">
        <authorList>
            <consortium name="The Citrobacter koseri Genome Sequencing Project"/>
            <person name="McClelland M."/>
            <person name="Sanderson E.K."/>
            <person name="Porwollik S."/>
            <person name="Spieth J."/>
            <person name="Clifton W.S."/>
            <person name="Latreille P."/>
            <person name="Courtney L."/>
            <person name="Wang C."/>
            <person name="Pepin K."/>
            <person name="Bhonagiri V."/>
            <person name="Nash W."/>
            <person name="Johnson M."/>
            <person name="Thiruvilangam P."/>
            <person name="Wilson R."/>
        </authorList>
    </citation>
    <scope>NUCLEOTIDE SEQUENCE [LARGE SCALE GENOMIC DNA]</scope>
    <source>
        <strain>ATCC BAA-895 / CDC 4225-83 / SGSC4696</strain>
    </source>
</reference>
<sequence length="677" mass="76021">MTQVAKKILVTCALPYANGSIHLGHMLEHIQADVWVRYQRMRGHQVNFICADDAHGTPIMLKAQQLGITPEQMIGEMSQEHQTDFAGFNISYDNYHSTHSEENRELSELIYTRLKENGFIKNRTISQLYDPEKGMFLPDRFVKGTCPKCKSPDQYGDNCEVCGATYSPTELIEPKSVVSGATPVMRDSEHFFFDLPSFSEMLQAWTRSGALQEQVANKMQEWFESGLQQWDISRDAPYFGFEIPNAPGKFFYVWLDAPIGYMGSFKNLCNKRGDLTSFDDYWKKDSDAELYHFIGKDIVYFHSLFWPAMLEGSGFRKPTNLFVHGYVTVNGAKMSKSRGTFIKASTWLNHFDADSLRYYYTAKLSSRIDDIDLNLEDFVQRVNADIVNKVVNLASRNAGFINKRFDGVLAAELADPALYKTFTDAAAVIGEAWESREFGKAIREIMALADMANRYVDEQAPWVVAKQEGRDADLQAICSMGINLFRVLMTYLKPVLPTLSERVEAFLNTELSWDAIAQPLLGHKVNAFKALYNRIDMKQVDALVEASKEEVKAAAAPVTGPLADDPIQETITFDDFAKVDLRVALIENAEFVEGSDKLLRLTLDLGGEKRNVFSGIRSAYPDPQALIGRHTVMVANLAPRKMRFGISEGMVMAAGPGGKDIFLLSPDDGAKPGQQVK</sequence>